<dbReference type="EMBL" id="CP001655">
    <property type="protein sequence ID" value="ACT08582.1"/>
    <property type="molecule type" value="Genomic_DNA"/>
</dbReference>
<dbReference type="RefSeq" id="WP_015848091.1">
    <property type="nucleotide sequence ID" value="NC_012912.1"/>
</dbReference>
<dbReference type="SMR" id="C6CMD7"/>
<dbReference type="STRING" id="561229.Dd1591_3782"/>
<dbReference type="GeneID" id="45081809"/>
<dbReference type="KEGG" id="dze:Dd1591_3782"/>
<dbReference type="eggNOG" id="COG3107">
    <property type="taxonomic scope" value="Bacteria"/>
</dbReference>
<dbReference type="HOGENOM" id="CLU_026091_1_1_6"/>
<dbReference type="OrthoDB" id="6708821at2"/>
<dbReference type="Proteomes" id="UP000002735">
    <property type="component" value="Chromosome"/>
</dbReference>
<dbReference type="GO" id="GO:0031241">
    <property type="term" value="C:periplasmic side of cell outer membrane"/>
    <property type="evidence" value="ECO:0007669"/>
    <property type="project" value="UniProtKB-UniRule"/>
</dbReference>
<dbReference type="GO" id="GO:0030234">
    <property type="term" value="F:enzyme regulator activity"/>
    <property type="evidence" value="ECO:0007669"/>
    <property type="project" value="UniProtKB-UniRule"/>
</dbReference>
<dbReference type="GO" id="GO:0009252">
    <property type="term" value="P:peptidoglycan biosynthetic process"/>
    <property type="evidence" value="ECO:0007669"/>
    <property type="project" value="UniProtKB-UniRule"/>
</dbReference>
<dbReference type="GO" id="GO:0008360">
    <property type="term" value="P:regulation of cell shape"/>
    <property type="evidence" value="ECO:0007669"/>
    <property type="project" value="UniProtKB-KW"/>
</dbReference>
<dbReference type="CDD" id="cd06339">
    <property type="entry name" value="PBP1_YraM_LppC_lipoprotein-like"/>
    <property type="match status" value="1"/>
</dbReference>
<dbReference type="Gene3D" id="1.25.40.650">
    <property type="match status" value="1"/>
</dbReference>
<dbReference type="Gene3D" id="3.40.50.2300">
    <property type="match status" value="2"/>
</dbReference>
<dbReference type="Gene3D" id="1.25.40.10">
    <property type="entry name" value="Tetratricopeptide repeat domain"/>
    <property type="match status" value="1"/>
</dbReference>
<dbReference type="HAMAP" id="MF_01890">
    <property type="entry name" value="LpoA"/>
    <property type="match status" value="1"/>
</dbReference>
<dbReference type="InterPro" id="IPR007443">
    <property type="entry name" value="LpoA"/>
</dbReference>
<dbReference type="InterPro" id="IPR028082">
    <property type="entry name" value="Peripla_BP_I"/>
</dbReference>
<dbReference type="InterPro" id="IPR011990">
    <property type="entry name" value="TPR-like_helical_dom_sf"/>
</dbReference>
<dbReference type="PANTHER" id="PTHR38038">
    <property type="entry name" value="PENICILLIN-BINDING PROTEIN ACTIVATOR LPOA"/>
    <property type="match status" value="1"/>
</dbReference>
<dbReference type="PANTHER" id="PTHR38038:SF1">
    <property type="entry name" value="PENICILLIN-BINDING PROTEIN ACTIVATOR LPOA"/>
    <property type="match status" value="1"/>
</dbReference>
<dbReference type="Pfam" id="PF04348">
    <property type="entry name" value="LppC"/>
    <property type="match status" value="2"/>
</dbReference>
<dbReference type="SUPFAM" id="SSF53822">
    <property type="entry name" value="Periplasmic binding protein-like I"/>
    <property type="match status" value="1"/>
</dbReference>
<name>LPOA_DICC1</name>
<organism>
    <name type="scientific">Dickeya chrysanthemi (strain Ech1591)</name>
    <name type="common">Dickeya zeae (strain Ech1591)</name>
    <dbReference type="NCBI Taxonomy" id="561229"/>
    <lineage>
        <taxon>Bacteria</taxon>
        <taxon>Pseudomonadati</taxon>
        <taxon>Pseudomonadota</taxon>
        <taxon>Gammaproteobacteria</taxon>
        <taxon>Enterobacterales</taxon>
        <taxon>Pectobacteriaceae</taxon>
        <taxon>Dickeya</taxon>
    </lineage>
</organism>
<keyword id="KW-0998">Cell outer membrane</keyword>
<keyword id="KW-0133">Cell shape</keyword>
<keyword id="KW-0449">Lipoprotein</keyword>
<keyword id="KW-0472">Membrane</keyword>
<keyword id="KW-0564">Palmitate</keyword>
<keyword id="KW-0573">Peptidoglycan synthesis</keyword>
<keyword id="KW-0732">Signal</keyword>
<proteinExistence type="inferred from homology"/>
<sequence length="682" mass="72145">MLPLNSVRTHAGRLVPVMLAALFLAGCPSQAPQSPAMQQRVEGKAGASSDYYLQQMQQSSDDSKADWQLLAIHALIQEGKLPQAGNQLGTLPSQLGDKQRQEQRLLTAELAVAQNDMNAANTMLAQLDVKSLSPQQQERYYQAQIKAAQDRTSLTLIRAYIGLEPLLQGDAHQRNIDQTWTALTRLNQQDLSSMVINVDENTLQGWLDLLNLWQTKAQVPSDLQAAIEDWKKRYPRHPAAKQLPSQLGGTPPAAAAPTTGETAPTGGNAIALLLPLNGQAQAFANAIQQGFSAARSGQASLAMPAQPAQLAQAANNAAAATPGAPAVPSPASSTPSAVSPTPAAATTVMPALTAATAGTIPVKVYDTSNQALANVIAQAQKDGATTIVGPLLKNEVEQLPGLNPSLNVLALNQPEHIQPNPNICYFALSPEDEAADAAQFIHKQGKQHPLILAPRGNLGDRVVAAFAKSWQQQSGGVVLQQRTGSMYDLKQAINSGAGIPLNGQPVITAASAPQPSTTVGGLTIPNQAPPIAAVTSDGNVDAIYIIATPDELALLKPMIDMRNKGASRPALYASSRSYQAGLGPDFRFEMEGLQFSDIPLLTGASPALMQQVSTQFRNDYSLVRLFAMGMDAWKLASDFSQLHQPGSSLSGATGILSASSDCVVNRKLTWLQFRQGQLVPAS</sequence>
<evidence type="ECO:0000255" key="1">
    <source>
        <dbReference type="HAMAP-Rule" id="MF_01890"/>
    </source>
</evidence>
<evidence type="ECO:0000256" key="2">
    <source>
        <dbReference type="SAM" id="MobiDB-lite"/>
    </source>
</evidence>
<reference key="1">
    <citation type="submission" date="2009-06" db="EMBL/GenBank/DDBJ databases">
        <title>Complete sequence of Dickeya zeae Ech1591.</title>
        <authorList>
            <consortium name="US DOE Joint Genome Institute"/>
            <person name="Lucas S."/>
            <person name="Copeland A."/>
            <person name="Lapidus A."/>
            <person name="Glavina del Rio T."/>
            <person name="Tice H."/>
            <person name="Bruce D."/>
            <person name="Goodwin L."/>
            <person name="Pitluck S."/>
            <person name="Chertkov O."/>
            <person name="Brettin T."/>
            <person name="Detter J.C."/>
            <person name="Han C."/>
            <person name="Larimer F."/>
            <person name="Land M."/>
            <person name="Hauser L."/>
            <person name="Kyrpides N."/>
            <person name="Ovchinnikova G."/>
            <person name="Balakrishnan V."/>
            <person name="Glasner J."/>
            <person name="Perna N.T."/>
        </authorList>
    </citation>
    <scope>NUCLEOTIDE SEQUENCE [LARGE SCALE GENOMIC DNA]</scope>
    <source>
        <strain>Ech1591</strain>
    </source>
</reference>
<comment type="function">
    <text evidence="1">Regulator of peptidoglycan synthesis that is essential for the function of penicillin-binding protein 1A (PBP1a).</text>
</comment>
<comment type="subunit">
    <text evidence="1">Interacts with PBP1a.</text>
</comment>
<comment type="subcellular location">
    <subcellularLocation>
        <location evidence="1">Cell outer membrane</location>
        <topology evidence="1">Lipid-anchor</topology>
        <orientation evidence="1">Periplasmic side</orientation>
    </subcellularLocation>
</comment>
<comment type="similarity">
    <text evidence="1">Belongs to the LpoA family.</text>
</comment>
<accession>C6CMD7</accession>
<gene>
    <name evidence="1" type="primary">lpoA</name>
    <name type="ordered locus">Dd1591_3782</name>
</gene>
<protein>
    <recommendedName>
        <fullName evidence="1">Penicillin-binding protein activator LpoA</fullName>
        <shortName evidence="1">PBP activator LpoA</shortName>
    </recommendedName>
</protein>
<feature type="signal peptide" evidence="1">
    <location>
        <begin position="1"/>
        <end position="26"/>
    </location>
</feature>
<feature type="chain" id="PRO_0000405927" description="Penicillin-binding protein activator LpoA">
    <location>
        <begin position="27"/>
        <end position="682"/>
    </location>
</feature>
<feature type="region of interest" description="Disordered" evidence="2">
    <location>
        <begin position="240"/>
        <end position="262"/>
    </location>
</feature>
<feature type="region of interest" description="Disordered" evidence="2">
    <location>
        <begin position="314"/>
        <end position="341"/>
    </location>
</feature>
<feature type="compositionally biased region" description="Low complexity" evidence="2">
    <location>
        <begin position="248"/>
        <end position="262"/>
    </location>
</feature>
<feature type="lipid moiety-binding region" description="N-palmitoyl cysteine" evidence="1">
    <location>
        <position position="27"/>
    </location>
</feature>
<feature type="lipid moiety-binding region" description="S-diacylglycerol cysteine" evidence="1">
    <location>
        <position position="27"/>
    </location>
</feature>